<dbReference type="EC" id="2.4.2.22" evidence="1"/>
<dbReference type="EMBL" id="CP001186">
    <property type="protein sequence ID" value="ACK93731.1"/>
    <property type="molecule type" value="Genomic_DNA"/>
</dbReference>
<dbReference type="RefSeq" id="WP_000866481.1">
    <property type="nucleotide sequence ID" value="NC_011772.1"/>
</dbReference>
<dbReference type="SMR" id="B7IPE6"/>
<dbReference type="KEGG" id="bcg:BCG9842_B3719"/>
<dbReference type="HOGENOM" id="CLU_099015_0_0_9"/>
<dbReference type="UniPathway" id="UPA00602">
    <property type="reaction ID" value="UER00658"/>
</dbReference>
<dbReference type="Proteomes" id="UP000006744">
    <property type="component" value="Chromosome"/>
</dbReference>
<dbReference type="GO" id="GO:0005737">
    <property type="term" value="C:cytoplasm"/>
    <property type="evidence" value="ECO:0007669"/>
    <property type="project" value="UniProtKB-SubCell"/>
</dbReference>
<dbReference type="GO" id="GO:0000310">
    <property type="term" value="F:xanthine phosphoribosyltransferase activity"/>
    <property type="evidence" value="ECO:0007669"/>
    <property type="project" value="UniProtKB-UniRule"/>
</dbReference>
<dbReference type="GO" id="GO:0006166">
    <property type="term" value="P:purine ribonucleoside salvage"/>
    <property type="evidence" value="ECO:0007669"/>
    <property type="project" value="UniProtKB-KW"/>
</dbReference>
<dbReference type="GO" id="GO:0046110">
    <property type="term" value="P:xanthine metabolic process"/>
    <property type="evidence" value="ECO:0007669"/>
    <property type="project" value="InterPro"/>
</dbReference>
<dbReference type="GO" id="GO:0032265">
    <property type="term" value="P:XMP salvage"/>
    <property type="evidence" value="ECO:0007669"/>
    <property type="project" value="UniProtKB-UniRule"/>
</dbReference>
<dbReference type="CDD" id="cd06223">
    <property type="entry name" value="PRTases_typeI"/>
    <property type="match status" value="1"/>
</dbReference>
<dbReference type="Gene3D" id="3.40.50.2020">
    <property type="match status" value="1"/>
</dbReference>
<dbReference type="HAMAP" id="MF_01184">
    <property type="entry name" value="XPRTase"/>
    <property type="match status" value="1"/>
</dbReference>
<dbReference type="InterPro" id="IPR000836">
    <property type="entry name" value="PRibTrfase_dom"/>
</dbReference>
<dbReference type="InterPro" id="IPR029057">
    <property type="entry name" value="PRTase-like"/>
</dbReference>
<dbReference type="InterPro" id="IPR050118">
    <property type="entry name" value="Pur/Pyrimidine_PRTase"/>
</dbReference>
<dbReference type="InterPro" id="IPR010079">
    <property type="entry name" value="Xanthine_PRibTrfase"/>
</dbReference>
<dbReference type="NCBIfam" id="NF006671">
    <property type="entry name" value="PRK09219.1"/>
    <property type="match status" value="1"/>
</dbReference>
<dbReference type="NCBIfam" id="TIGR01744">
    <property type="entry name" value="XPRTase"/>
    <property type="match status" value="1"/>
</dbReference>
<dbReference type="PANTHER" id="PTHR43864">
    <property type="entry name" value="HYPOXANTHINE/GUANINE PHOSPHORIBOSYLTRANSFERASE"/>
    <property type="match status" value="1"/>
</dbReference>
<dbReference type="PANTHER" id="PTHR43864:SF1">
    <property type="entry name" value="XANTHINE PHOSPHORIBOSYLTRANSFERASE"/>
    <property type="match status" value="1"/>
</dbReference>
<dbReference type="Pfam" id="PF00156">
    <property type="entry name" value="Pribosyltran"/>
    <property type="match status" value="1"/>
</dbReference>
<dbReference type="SUPFAM" id="SSF53271">
    <property type="entry name" value="PRTase-like"/>
    <property type="match status" value="1"/>
</dbReference>
<reference key="1">
    <citation type="submission" date="2008-10" db="EMBL/GenBank/DDBJ databases">
        <title>Genome sequence of Bacillus cereus G9842.</title>
        <authorList>
            <person name="Dodson R.J."/>
            <person name="Durkin A.S."/>
            <person name="Rosovitz M.J."/>
            <person name="Rasko D.A."/>
            <person name="Hoffmaster A."/>
            <person name="Ravel J."/>
            <person name="Sutton G."/>
        </authorList>
    </citation>
    <scope>NUCLEOTIDE SEQUENCE [LARGE SCALE GENOMIC DNA]</scope>
    <source>
        <strain>G9842</strain>
    </source>
</reference>
<feature type="chain" id="PRO_1000138230" description="Xanthine phosphoribosyltransferase">
    <location>
        <begin position="1"/>
        <end position="197"/>
    </location>
</feature>
<feature type="binding site" evidence="1">
    <location>
        <position position="20"/>
    </location>
    <ligand>
        <name>xanthine</name>
        <dbReference type="ChEBI" id="CHEBI:17712"/>
    </ligand>
</feature>
<feature type="binding site" evidence="1">
    <location>
        <position position="27"/>
    </location>
    <ligand>
        <name>xanthine</name>
        <dbReference type="ChEBI" id="CHEBI:17712"/>
    </ligand>
</feature>
<feature type="binding site" evidence="1">
    <location>
        <begin position="128"/>
        <end position="132"/>
    </location>
    <ligand>
        <name>5-phospho-alpha-D-ribose 1-diphosphate</name>
        <dbReference type="ChEBI" id="CHEBI:58017"/>
    </ligand>
</feature>
<feature type="binding site" evidence="1">
    <location>
        <position position="156"/>
    </location>
    <ligand>
        <name>xanthine</name>
        <dbReference type="ChEBI" id="CHEBI:17712"/>
    </ligand>
</feature>
<organism>
    <name type="scientific">Bacillus cereus (strain G9842)</name>
    <dbReference type="NCBI Taxonomy" id="405531"/>
    <lineage>
        <taxon>Bacteria</taxon>
        <taxon>Bacillati</taxon>
        <taxon>Bacillota</taxon>
        <taxon>Bacilli</taxon>
        <taxon>Bacillales</taxon>
        <taxon>Bacillaceae</taxon>
        <taxon>Bacillus</taxon>
        <taxon>Bacillus cereus group</taxon>
    </lineage>
</organism>
<gene>
    <name evidence="1" type="primary">xpt</name>
    <name type="ordered locus">BCG9842_B3719</name>
</gene>
<sequence length="197" mass="21597">MKVLQEKILNEGKVLSGDVLKVDAFLNHQIDPVLMQEIGKEFAKRFKEENITKIVTIESSGIAPAVMAALELGVKVIFARKRKSLTLQDNMYVANVYSFTKQETNEISLSRNHIDENDRVLIIDDFLANGQAALGLMSLVEQAGASIAGIGIVIEKAFQDGGKKLREQGVRVESLAEIASLDNGTVAFVQHETAEVK</sequence>
<accession>B7IPE6</accession>
<keyword id="KW-0963">Cytoplasm</keyword>
<keyword id="KW-0328">Glycosyltransferase</keyword>
<keyword id="KW-0660">Purine salvage</keyword>
<keyword id="KW-0808">Transferase</keyword>
<protein>
    <recommendedName>
        <fullName evidence="1">Xanthine phosphoribosyltransferase</fullName>
        <shortName evidence="1">XPRTase</shortName>
        <ecNumber evidence="1">2.4.2.22</ecNumber>
    </recommendedName>
</protein>
<proteinExistence type="inferred from homology"/>
<name>XPT_BACC2</name>
<evidence type="ECO:0000255" key="1">
    <source>
        <dbReference type="HAMAP-Rule" id="MF_01184"/>
    </source>
</evidence>
<comment type="function">
    <text evidence="1">Converts the preformed base xanthine, a product of nucleic acid breakdown, to xanthosine 5'-monophosphate (XMP), so it can be reused for RNA or DNA synthesis.</text>
</comment>
<comment type="catalytic activity">
    <reaction evidence="1">
        <text>XMP + diphosphate = xanthine + 5-phospho-alpha-D-ribose 1-diphosphate</text>
        <dbReference type="Rhea" id="RHEA:10800"/>
        <dbReference type="ChEBI" id="CHEBI:17712"/>
        <dbReference type="ChEBI" id="CHEBI:33019"/>
        <dbReference type="ChEBI" id="CHEBI:57464"/>
        <dbReference type="ChEBI" id="CHEBI:58017"/>
        <dbReference type="EC" id="2.4.2.22"/>
    </reaction>
</comment>
<comment type="pathway">
    <text evidence="1">Purine metabolism; XMP biosynthesis via salvage pathway; XMP from xanthine: step 1/1.</text>
</comment>
<comment type="subunit">
    <text evidence="1">Homodimer.</text>
</comment>
<comment type="subcellular location">
    <subcellularLocation>
        <location evidence="1">Cytoplasm</location>
    </subcellularLocation>
</comment>
<comment type="similarity">
    <text evidence="1">Belongs to the purine/pyrimidine phosphoribosyltransferase family. Xpt subfamily.</text>
</comment>